<sequence length="104" mass="11694">MGTLDPSVCGGLPPEVCEQLMMDQQELIKIKLEKRKWGREVTIIEGLNLDNERLKKVAKQLKSKLATGGTVKNGRIELQGDHRDRVKKLLEEMGYPPENIVIVG</sequence>
<name>SUI1_IGNH4</name>
<comment type="similarity">
    <text evidence="1">Belongs to the SUI1 family.</text>
</comment>
<proteinExistence type="inferred from homology"/>
<feature type="chain" id="PRO_1000006429" description="Protein translation factor SUI1 homolog">
    <location>
        <begin position="1"/>
        <end position="104"/>
    </location>
</feature>
<organism>
    <name type="scientific">Ignicoccus hospitalis (strain KIN4/I / DSM 18386 / JCM 14125)</name>
    <dbReference type="NCBI Taxonomy" id="453591"/>
    <lineage>
        <taxon>Archaea</taxon>
        <taxon>Thermoproteota</taxon>
        <taxon>Thermoprotei</taxon>
        <taxon>Desulfurococcales</taxon>
        <taxon>Desulfurococcaceae</taxon>
        <taxon>Ignicoccus</taxon>
    </lineage>
</organism>
<evidence type="ECO:0000255" key="1">
    <source>
        <dbReference type="HAMAP-Rule" id="MF_00604"/>
    </source>
</evidence>
<protein>
    <recommendedName>
        <fullName evidence="1">Protein translation factor SUI1 homolog</fullName>
    </recommendedName>
</protein>
<dbReference type="EMBL" id="CP000816">
    <property type="protein sequence ID" value="ABU82457.1"/>
    <property type="molecule type" value="Genomic_DNA"/>
</dbReference>
<dbReference type="RefSeq" id="WP_012123421.1">
    <property type="nucleotide sequence ID" value="NC_009776.1"/>
</dbReference>
<dbReference type="SMR" id="A8AC05"/>
<dbReference type="STRING" id="453591.Igni_1281"/>
<dbReference type="GeneID" id="5562940"/>
<dbReference type="KEGG" id="iho:Igni_1281"/>
<dbReference type="eggNOG" id="arCOG04223">
    <property type="taxonomic scope" value="Archaea"/>
</dbReference>
<dbReference type="HOGENOM" id="CLU_082805_6_1_2"/>
<dbReference type="OrthoDB" id="11182at2157"/>
<dbReference type="PhylomeDB" id="A8AC05"/>
<dbReference type="Proteomes" id="UP000000262">
    <property type="component" value="Chromosome"/>
</dbReference>
<dbReference type="GO" id="GO:0003729">
    <property type="term" value="F:mRNA binding"/>
    <property type="evidence" value="ECO:0007669"/>
    <property type="project" value="TreeGrafter"/>
</dbReference>
<dbReference type="GO" id="GO:0003743">
    <property type="term" value="F:translation initiation factor activity"/>
    <property type="evidence" value="ECO:0007669"/>
    <property type="project" value="InterPro"/>
</dbReference>
<dbReference type="GO" id="GO:0001731">
    <property type="term" value="P:formation of translation preinitiation complex"/>
    <property type="evidence" value="ECO:0007669"/>
    <property type="project" value="TreeGrafter"/>
</dbReference>
<dbReference type="GO" id="GO:0006417">
    <property type="term" value="P:regulation of translation"/>
    <property type="evidence" value="ECO:0007669"/>
    <property type="project" value="UniProtKB-UniRule"/>
</dbReference>
<dbReference type="GO" id="GO:0002188">
    <property type="term" value="P:translation reinitiation"/>
    <property type="evidence" value="ECO:0007669"/>
    <property type="project" value="TreeGrafter"/>
</dbReference>
<dbReference type="CDD" id="cd11567">
    <property type="entry name" value="YciH_like"/>
    <property type="match status" value="1"/>
</dbReference>
<dbReference type="Gene3D" id="3.30.780.10">
    <property type="entry name" value="SUI1-like domain"/>
    <property type="match status" value="1"/>
</dbReference>
<dbReference type="HAMAP" id="MF_00604">
    <property type="entry name" value="SUI1"/>
    <property type="match status" value="1"/>
</dbReference>
<dbReference type="InterPro" id="IPR050318">
    <property type="entry name" value="DENR/SUI1_TIF"/>
</dbReference>
<dbReference type="InterPro" id="IPR001950">
    <property type="entry name" value="SUI1"/>
</dbReference>
<dbReference type="InterPro" id="IPR022851">
    <property type="entry name" value="SUI1_arc"/>
</dbReference>
<dbReference type="InterPro" id="IPR005872">
    <property type="entry name" value="SUI1_arc_bac"/>
</dbReference>
<dbReference type="InterPro" id="IPR036877">
    <property type="entry name" value="SUI1_dom_sf"/>
</dbReference>
<dbReference type="NCBIfam" id="NF002096">
    <property type="entry name" value="PRK00939.1"/>
    <property type="match status" value="1"/>
</dbReference>
<dbReference type="NCBIfam" id="TIGR01158">
    <property type="entry name" value="SUI1_rel"/>
    <property type="match status" value="1"/>
</dbReference>
<dbReference type="PANTHER" id="PTHR12789:SF0">
    <property type="entry name" value="DENSITY-REGULATED PROTEIN"/>
    <property type="match status" value="1"/>
</dbReference>
<dbReference type="PANTHER" id="PTHR12789">
    <property type="entry name" value="DENSITY-REGULATED PROTEIN HOMOLOG"/>
    <property type="match status" value="1"/>
</dbReference>
<dbReference type="Pfam" id="PF01253">
    <property type="entry name" value="SUI1"/>
    <property type="match status" value="1"/>
</dbReference>
<dbReference type="PIRSF" id="PIRSF037511">
    <property type="entry name" value="Transl_init_SUI1_pro"/>
    <property type="match status" value="1"/>
</dbReference>
<dbReference type="SUPFAM" id="SSF55159">
    <property type="entry name" value="eIF1-like"/>
    <property type="match status" value="1"/>
</dbReference>
<dbReference type="PROSITE" id="PS50296">
    <property type="entry name" value="SUI1"/>
    <property type="match status" value="1"/>
</dbReference>
<accession>A8AC05</accession>
<gene>
    <name type="ordered locus">Igni_1281</name>
</gene>
<reference key="1">
    <citation type="journal article" date="2008" name="Genome Biol.">
        <title>A genomic analysis of the archaeal system Ignicoccus hospitalis-Nanoarchaeum equitans.</title>
        <authorList>
            <person name="Podar M."/>
            <person name="Anderson I."/>
            <person name="Makarova K.S."/>
            <person name="Elkins J.G."/>
            <person name="Ivanova N."/>
            <person name="Wall M.A."/>
            <person name="Lykidis A."/>
            <person name="Mavromatis K."/>
            <person name="Sun H."/>
            <person name="Hudson M.E."/>
            <person name="Chen W."/>
            <person name="Deciu C."/>
            <person name="Hutchison D."/>
            <person name="Eads J.R."/>
            <person name="Anderson A."/>
            <person name="Fernandes F."/>
            <person name="Szeto E."/>
            <person name="Lapidus A."/>
            <person name="Kyrpides N.C."/>
            <person name="Saier M.H. Jr."/>
            <person name="Richardson P.M."/>
            <person name="Rachel R."/>
            <person name="Huber H."/>
            <person name="Eisen J.A."/>
            <person name="Koonin E.V."/>
            <person name="Keller M."/>
            <person name="Stetter K.O."/>
        </authorList>
    </citation>
    <scope>NUCLEOTIDE SEQUENCE [LARGE SCALE GENOMIC DNA]</scope>
    <source>
        <strain>KIN4/I / DSM 18386 / JCM 14125</strain>
    </source>
</reference>
<keyword id="KW-0648">Protein biosynthesis</keyword>
<keyword id="KW-1185">Reference proteome</keyword>
<keyword id="KW-0810">Translation regulation</keyword>